<gene>
    <name evidence="1" type="primary">ruvA</name>
    <name type="ordered locus">Tola_2712</name>
</gene>
<proteinExistence type="inferred from homology"/>
<feature type="chain" id="PRO_1000202005" description="Holliday junction branch migration complex subunit RuvA">
    <location>
        <begin position="1"/>
        <end position="206"/>
    </location>
</feature>
<feature type="region of interest" description="Domain I" evidence="1">
    <location>
        <begin position="1"/>
        <end position="64"/>
    </location>
</feature>
<feature type="region of interest" description="Domain II" evidence="1">
    <location>
        <begin position="65"/>
        <end position="143"/>
    </location>
</feature>
<feature type="region of interest" description="Flexible linker" evidence="1">
    <location>
        <begin position="144"/>
        <end position="157"/>
    </location>
</feature>
<feature type="region of interest" description="Domain III" evidence="1">
    <location>
        <begin position="158"/>
        <end position="206"/>
    </location>
</feature>
<accession>C4LBN1</accession>
<protein>
    <recommendedName>
        <fullName evidence="1">Holliday junction branch migration complex subunit RuvA</fullName>
    </recommendedName>
</protein>
<reference key="1">
    <citation type="submission" date="2009-05" db="EMBL/GenBank/DDBJ databases">
        <title>Complete sequence of Tolumonas auensis DSM 9187.</title>
        <authorList>
            <consortium name="US DOE Joint Genome Institute"/>
            <person name="Lucas S."/>
            <person name="Copeland A."/>
            <person name="Lapidus A."/>
            <person name="Glavina del Rio T."/>
            <person name="Tice H."/>
            <person name="Bruce D."/>
            <person name="Goodwin L."/>
            <person name="Pitluck S."/>
            <person name="Chertkov O."/>
            <person name="Brettin T."/>
            <person name="Detter J.C."/>
            <person name="Han C."/>
            <person name="Larimer F."/>
            <person name="Land M."/>
            <person name="Hauser L."/>
            <person name="Kyrpides N."/>
            <person name="Mikhailova N."/>
            <person name="Spring S."/>
            <person name="Beller H."/>
        </authorList>
    </citation>
    <scope>NUCLEOTIDE SEQUENCE [LARGE SCALE GENOMIC DNA]</scope>
    <source>
        <strain>DSM 9187 / NBRC 110442 / TA 4</strain>
    </source>
</reference>
<keyword id="KW-0963">Cytoplasm</keyword>
<keyword id="KW-0227">DNA damage</keyword>
<keyword id="KW-0233">DNA recombination</keyword>
<keyword id="KW-0234">DNA repair</keyword>
<keyword id="KW-0238">DNA-binding</keyword>
<keyword id="KW-1185">Reference proteome</keyword>
<evidence type="ECO:0000255" key="1">
    <source>
        <dbReference type="HAMAP-Rule" id="MF_00031"/>
    </source>
</evidence>
<name>RUVA_TOLAT</name>
<dbReference type="EMBL" id="CP001616">
    <property type="protein sequence ID" value="ACQ94305.1"/>
    <property type="molecule type" value="Genomic_DNA"/>
</dbReference>
<dbReference type="RefSeq" id="WP_015879754.1">
    <property type="nucleotide sequence ID" value="NC_012691.1"/>
</dbReference>
<dbReference type="SMR" id="C4LBN1"/>
<dbReference type="STRING" id="595494.Tola_2712"/>
<dbReference type="KEGG" id="tau:Tola_2712"/>
<dbReference type="eggNOG" id="COG0632">
    <property type="taxonomic scope" value="Bacteria"/>
</dbReference>
<dbReference type="HOGENOM" id="CLU_087936_0_0_6"/>
<dbReference type="OrthoDB" id="5293449at2"/>
<dbReference type="Proteomes" id="UP000009073">
    <property type="component" value="Chromosome"/>
</dbReference>
<dbReference type="GO" id="GO:0005737">
    <property type="term" value="C:cytoplasm"/>
    <property type="evidence" value="ECO:0007669"/>
    <property type="project" value="UniProtKB-SubCell"/>
</dbReference>
<dbReference type="GO" id="GO:0009379">
    <property type="term" value="C:Holliday junction helicase complex"/>
    <property type="evidence" value="ECO:0007669"/>
    <property type="project" value="InterPro"/>
</dbReference>
<dbReference type="GO" id="GO:0048476">
    <property type="term" value="C:Holliday junction resolvase complex"/>
    <property type="evidence" value="ECO:0007669"/>
    <property type="project" value="UniProtKB-UniRule"/>
</dbReference>
<dbReference type="GO" id="GO:0005524">
    <property type="term" value="F:ATP binding"/>
    <property type="evidence" value="ECO:0007669"/>
    <property type="project" value="InterPro"/>
</dbReference>
<dbReference type="GO" id="GO:0000400">
    <property type="term" value="F:four-way junction DNA binding"/>
    <property type="evidence" value="ECO:0007669"/>
    <property type="project" value="UniProtKB-UniRule"/>
</dbReference>
<dbReference type="GO" id="GO:0009378">
    <property type="term" value="F:four-way junction helicase activity"/>
    <property type="evidence" value="ECO:0007669"/>
    <property type="project" value="InterPro"/>
</dbReference>
<dbReference type="GO" id="GO:0006310">
    <property type="term" value="P:DNA recombination"/>
    <property type="evidence" value="ECO:0007669"/>
    <property type="project" value="UniProtKB-UniRule"/>
</dbReference>
<dbReference type="GO" id="GO:0006281">
    <property type="term" value="P:DNA repair"/>
    <property type="evidence" value="ECO:0007669"/>
    <property type="project" value="UniProtKB-UniRule"/>
</dbReference>
<dbReference type="CDD" id="cd14332">
    <property type="entry name" value="UBA_RuvA_C"/>
    <property type="match status" value="1"/>
</dbReference>
<dbReference type="FunFam" id="1.10.150.20:FF:000012">
    <property type="entry name" value="Holliday junction ATP-dependent DNA helicase RuvA"/>
    <property type="match status" value="1"/>
</dbReference>
<dbReference type="FunFam" id="2.40.50.140:FF:000083">
    <property type="entry name" value="Holliday junction ATP-dependent DNA helicase RuvA"/>
    <property type="match status" value="1"/>
</dbReference>
<dbReference type="Gene3D" id="1.10.150.20">
    <property type="entry name" value="5' to 3' exonuclease, C-terminal subdomain"/>
    <property type="match status" value="1"/>
</dbReference>
<dbReference type="Gene3D" id="1.10.8.10">
    <property type="entry name" value="DNA helicase RuvA subunit, C-terminal domain"/>
    <property type="match status" value="1"/>
</dbReference>
<dbReference type="Gene3D" id="2.40.50.140">
    <property type="entry name" value="Nucleic acid-binding proteins"/>
    <property type="match status" value="1"/>
</dbReference>
<dbReference type="HAMAP" id="MF_00031">
    <property type="entry name" value="DNA_HJ_migration_RuvA"/>
    <property type="match status" value="1"/>
</dbReference>
<dbReference type="InterPro" id="IPR013849">
    <property type="entry name" value="DNA_helicase_Holl-junc_RuvA_I"/>
</dbReference>
<dbReference type="InterPro" id="IPR003583">
    <property type="entry name" value="Hlx-hairpin-Hlx_DNA-bd_motif"/>
</dbReference>
<dbReference type="InterPro" id="IPR012340">
    <property type="entry name" value="NA-bd_OB-fold"/>
</dbReference>
<dbReference type="InterPro" id="IPR000085">
    <property type="entry name" value="RuvA"/>
</dbReference>
<dbReference type="InterPro" id="IPR010994">
    <property type="entry name" value="RuvA_2-like"/>
</dbReference>
<dbReference type="InterPro" id="IPR011114">
    <property type="entry name" value="RuvA_C"/>
</dbReference>
<dbReference type="InterPro" id="IPR036267">
    <property type="entry name" value="RuvA_C_sf"/>
</dbReference>
<dbReference type="NCBIfam" id="TIGR00084">
    <property type="entry name" value="ruvA"/>
    <property type="match status" value="1"/>
</dbReference>
<dbReference type="Pfam" id="PF14520">
    <property type="entry name" value="HHH_5"/>
    <property type="match status" value="1"/>
</dbReference>
<dbReference type="Pfam" id="PF07499">
    <property type="entry name" value="RuvA_C"/>
    <property type="match status" value="1"/>
</dbReference>
<dbReference type="Pfam" id="PF01330">
    <property type="entry name" value="RuvA_N"/>
    <property type="match status" value="1"/>
</dbReference>
<dbReference type="SMART" id="SM00278">
    <property type="entry name" value="HhH1"/>
    <property type="match status" value="2"/>
</dbReference>
<dbReference type="SUPFAM" id="SSF46929">
    <property type="entry name" value="DNA helicase RuvA subunit, C-terminal domain"/>
    <property type="match status" value="1"/>
</dbReference>
<dbReference type="SUPFAM" id="SSF50249">
    <property type="entry name" value="Nucleic acid-binding proteins"/>
    <property type="match status" value="1"/>
</dbReference>
<dbReference type="SUPFAM" id="SSF47781">
    <property type="entry name" value="RuvA domain 2-like"/>
    <property type="match status" value="1"/>
</dbReference>
<sequence length="206" mass="22615">MIGRLHGIIIEKSPPEILLDVGGVGYELQLPMTCFYELPAVGQEATIITHFVVREDAQLLYGFNTRQERTLFRELLKANGVGPKLALAIMSGMSANQFVSCVEREDVSSLVKLPGVGKKTAERLIVEMKDRLKGWISHDLFTPYTDAAPVDHEPSLAPADTVESEAVAALLALGYKPQQASLVVSKVIKPEMTVENVIREALRSML</sequence>
<organism>
    <name type="scientific">Tolumonas auensis (strain DSM 9187 / NBRC 110442 / TA 4)</name>
    <dbReference type="NCBI Taxonomy" id="595494"/>
    <lineage>
        <taxon>Bacteria</taxon>
        <taxon>Pseudomonadati</taxon>
        <taxon>Pseudomonadota</taxon>
        <taxon>Gammaproteobacteria</taxon>
        <taxon>Aeromonadales</taxon>
        <taxon>Aeromonadaceae</taxon>
        <taxon>Tolumonas</taxon>
    </lineage>
</organism>
<comment type="function">
    <text evidence="1">The RuvA-RuvB-RuvC complex processes Holliday junction (HJ) DNA during genetic recombination and DNA repair, while the RuvA-RuvB complex plays an important role in the rescue of blocked DNA replication forks via replication fork reversal (RFR). RuvA specifically binds to HJ cruciform DNA, conferring on it an open structure. The RuvB hexamer acts as an ATP-dependent pump, pulling dsDNA into and through the RuvAB complex. HJ branch migration allows RuvC to scan DNA until it finds its consensus sequence, where it cleaves and resolves the cruciform DNA.</text>
</comment>
<comment type="subunit">
    <text evidence="1">Homotetramer. Forms an RuvA(8)-RuvB(12)-Holliday junction (HJ) complex. HJ DNA is sandwiched between 2 RuvA tetramers; dsDNA enters through RuvA and exits via RuvB. An RuvB hexamer assembles on each DNA strand where it exits the tetramer. Each RuvB hexamer is contacted by two RuvA subunits (via domain III) on 2 adjacent RuvB subunits; this complex drives branch migration. In the full resolvosome a probable DNA-RuvA(4)-RuvB(12)-RuvC(2) complex forms which resolves the HJ.</text>
</comment>
<comment type="subcellular location">
    <subcellularLocation>
        <location evidence="1">Cytoplasm</location>
    </subcellularLocation>
</comment>
<comment type="domain">
    <text evidence="1">Has three domains with a flexible linker between the domains II and III and assumes an 'L' shape. Domain III is highly mobile and contacts RuvB.</text>
</comment>
<comment type="similarity">
    <text evidence="1">Belongs to the RuvA family.</text>
</comment>